<protein>
    <recommendedName>
        <fullName evidence="1">Large ribosomal subunit protein uL15</fullName>
    </recommendedName>
    <alternativeName>
        <fullName evidence="3">50S ribosomal protein L15</fullName>
    </alternativeName>
</protein>
<evidence type="ECO:0000255" key="1">
    <source>
        <dbReference type="HAMAP-Rule" id="MF_01341"/>
    </source>
</evidence>
<evidence type="ECO:0000256" key="2">
    <source>
        <dbReference type="SAM" id="MobiDB-lite"/>
    </source>
</evidence>
<evidence type="ECO:0000305" key="3"/>
<feature type="chain" id="PRO_1000054448" description="Large ribosomal subunit protein uL15">
    <location>
        <begin position="1"/>
        <end position="146"/>
    </location>
</feature>
<feature type="region of interest" description="Disordered" evidence="2">
    <location>
        <begin position="1"/>
        <end position="56"/>
    </location>
</feature>
<feature type="compositionally biased region" description="Gly residues" evidence="2">
    <location>
        <begin position="21"/>
        <end position="35"/>
    </location>
</feature>
<feature type="compositionally biased region" description="Gly residues" evidence="2">
    <location>
        <begin position="42"/>
        <end position="52"/>
    </location>
</feature>
<organism>
    <name type="scientific">Clostridium botulinum (strain ATCC 19397 / Type A)</name>
    <dbReference type="NCBI Taxonomy" id="441770"/>
    <lineage>
        <taxon>Bacteria</taxon>
        <taxon>Bacillati</taxon>
        <taxon>Bacillota</taxon>
        <taxon>Clostridia</taxon>
        <taxon>Eubacteriales</taxon>
        <taxon>Clostridiaceae</taxon>
        <taxon>Clostridium</taxon>
    </lineage>
</organism>
<sequence>MKLHELKAAEGANKASKRVGRGTGSGLGKTSGRGQNGQNSRSGGGVRPGFEGGQMPLYRRLPKRGFKNIFAKEYAAINLDRLNCFEDGTVVTPELLVEKRVVKKVKDGVKILGNGNIEKKLTVKAAKFSKSAIEKIEAAGGKVEVI</sequence>
<reference key="1">
    <citation type="journal article" date="2007" name="PLoS ONE">
        <title>Analysis of the neurotoxin complex genes in Clostridium botulinum A1-A4 and B1 strains: BoNT/A3, /Ba4 and /B1 clusters are located within plasmids.</title>
        <authorList>
            <person name="Smith T.J."/>
            <person name="Hill K.K."/>
            <person name="Foley B.T."/>
            <person name="Detter J.C."/>
            <person name="Munk A.C."/>
            <person name="Bruce D.C."/>
            <person name="Doggett N.A."/>
            <person name="Smith L.A."/>
            <person name="Marks J.D."/>
            <person name="Xie G."/>
            <person name="Brettin T.S."/>
        </authorList>
    </citation>
    <scope>NUCLEOTIDE SEQUENCE [LARGE SCALE GENOMIC DNA]</scope>
    <source>
        <strain>ATCC 19397 / Type A</strain>
    </source>
</reference>
<gene>
    <name evidence="1" type="primary">rplO</name>
    <name type="ordered locus">CLB_3518</name>
</gene>
<keyword id="KW-0687">Ribonucleoprotein</keyword>
<keyword id="KW-0689">Ribosomal protein</keyword>
<keyword id="KW-0694">RNA-binding</keyword>
<keyword id="KW-0699">rRNA-binding</keyword>
<proteinExistence type="inferred from homology"/>
<accession>A7FQ41</accession>
<dbReference type="EMBL" id="CP000726">
    <property type="protein sequence ID" value="ABS34631.1"/>
    <property type="molecule type" value="Genomic_DNA"/>
</dbReference>
<dbReference type="RefSeq" id="WP_003357513.1">
    <property type="nucleotide sequence ID" value="NC_009697.1"/>
</dbReference>
<dbReference type="SMR" id="A7FQ41"/>
<dbReference type="GeneID" id="92940231"/>
<dbReference type="KEGG" id="cba:CLB_3518"/>
<dbReference type="HOGENOM" id="CLU_055188_4_2_9"/>
<dbReference type="GO" id="GO:0022625">
    <property type="term" value="C:cytosolic large ribosomal subunit"/>
    <property type="evidence" value="ECO:0007669"/>
    <property type="project" value="TreeGrafter"/>
</dbReference>
<dbReference type="GO" id="GO:0019843">
    <property type="term" value="F:rRNA binding"/>
    <property type="evidence" value="ECO:0007669"/>
    <property type="project" value="UniProtKB-UniRule"/>
</dbReference>
<dbReference type="GO" id="GO:0003735">
    <property type="term" value="F:structural constituent of ribosome"/>
    <property type="evidence" value="ECO:0007669"/>
    <property type="project" value="InterPro"/>
</dbReference>
<dbReference type="GO" id="GO:0006412">
    <property type="term" value="P:translation"/>
    <property type="evidence" value="ECO:0007669"/>
    <property type="project" value="UniProtKB-UniRule"/>
</dbReference>
<dbReference type="Gene3D" id="3.100.10.10">
    <property type="match status" value="1"/>
</dbReference>
<dbReference type="HAMAP" id="MF_01341">
    <property type="entry name" value="Ribosomal_uL15"/>
    <property type="match status" value="1"/>
</dbReference>
<dbReference type="InterPro" id="IPR030878">
    <property type="entry name" value="Ribosomal_uL15"/>
</dbReference>
<dbReference type="InterPro" id="IPR021131">
    <property type="entry name" value="Ribosomal_uL15/eL18"/>
</dbReference>
<dbReference type="InterPro" id="IPR036227">
    <property type="entry name" value="Ribosomal_uL15/eL18_sf"/>
</dbReference>
<dbReference type="InterPro" id="IPR005749">
    <property type="entry name" value="Ribosomal_uL15_bac-type"/>
</dbReference>
<dbReference type="InterPro" id="IPR001196">
    <property type="entry name" value="Ribosomal_uL15_CS"/>
</dbReference>
<dbReference type="NCBIfam" id="TIGR01071">
    <property type="entry name" value="rplO_bact"/>
    <property type="match status" value="1"/>
</dbReference>
<dbReference type="PANTHER" id="PTHR12934">
    <property type="entry name" value="50S RIBOSOMAL PROTEIN L15"/>
    <property type="match status" value="1"/>
</dbReference>
<dbReference type="PANTHER" id="PTHR12934:SF11">
    <property type="entry name" value="LARGE RIBOSOMAL SUBUNIT PROTEIN UL15M"/>
    <property type="match status" value="1"/>
</dbReference>
<dbReference type="Pfam" id="PF00828">
    <property type="entry name" value="Ribosomal_L27A"/>
    <property type="match status" value="1"/>
</dbReference>
<dbReference type="SUPFAM" id="SSF52080">
    <property type="entry name" value="Ribosomal proteins L15p and L18e"/>
    <property type="match status" value="1"/>
</dbReference>
<dbReference type="PROSITE" id="PS00475">
    <property type="entry name" value="RIBOSOMAL_L15"/>
    <property type="match status" value="1"/>
</dbReference>
<name>RL15_CLOB1</name>
<comment type="function">
    <text evidence="1">Binds to the 23S rRNA.</text>
</comment>
<comment type="subunit">
    <text evidence="1">Part of the 50S ribosomal subunit.</text>
</comment>
<comment type="similarity">
    <text evidence="1">Belongs to the universal ribosomal protein uL15 family.</text>
</comment>